<comment type="function">
    <text evidence="1">One of the primary rRNA binding proteins, it binds directly to 16S rRNA central domain where it helps coordinate assembly of the platform of the 30S subunit.</text>
</comment>
<comment type="subunit">
    <text evidence="1">Part of the 30S ribosomal subunit. Contacts proteins S5 and S12.</text>
</comment>
<comment type="similarity">
    <text evidence="1">Belongs to the universal ribosomal protein uS8 family.</text>
</comment>
<feature type="chain" id="PRO_1000085950" description="Small ribosomal subunit protein uS8">
    <location>
        <begin position="1"/>
        <end position="132"/>
    </location>
</feature>
<sequence>MTMTDPIADMLTRVRNANMVRHEKLELPASNIKKEIAEILKSEGFIKNVEYVEDDKQGVLRLFLKYGQNDERVITGLKRISKPGLRVYAKASEMPKVLNGLGIALVSTSEGVITDKEARKRNVGGEIIAYVW</sequence>
<name>RS8_STAAT</name>
<accession>A8Z343</accession>
<dbReference type="EMBL" id="CP000730">
    <property type="protein sequence ID" value="ABX30220.1"/>
    <property type="molecule type" value="Genomic_DNA"/>
</dbReference>
<dbReference type="RefSeq" id="WP_000178881.1">
    <property type="nucleotide sequence ID" value="NC_010079.1"/>
</dbReference>
<dbReference type="SMR" id="A8Z343"/>
<dbReference type="GeneID" id="98346548"/>
<dbReference type="KEGG" id="sax:USA300HOU_2227"/>
<dbReference type="HOGENOM" id="CLU_098428_0_2_9"/>
<dbReference type="GO" id="GO:1990904">
    <property type="term" value="C:ribonucleoprotein complex"/>
    <property type="evidence" value="ECO:0007669"/>
    <property type="project" value="UniProtKB-KW"/>
</dbReference>
<dbReference type="GO" id="GO:0005840">
    <property type="term" value="C:ribosome"/>
    <property type="evidence" value="ECO:0007669"/>
    <property type="project" value="UniProtKB-KW"/>
</dbReference>
<dbReference type="GO" id="GO:0019843">
    <property type="term" value="F:rRNA binding"/>
    <property type="evidence" value="ECO:0007669"/>
    <property type="project" value="UniProtKB-UniRule"/>
</dbReference>
<dbReference type="GO" id="GO:0003735">
    <property type="term" value="F:structural constituent of ribosome"/>
    <property type="evidence" value="ECO:0007669"/>
    <property type="project" value="InterPro"/>
</dbReference>
<dbReference type="GO" id="GO:0006412">
    <property type="term" value="P:translation"/>
    <property type="evidence" value="ECO:0007669"/>
    <property type="project" value="UniProtKB-UniRule"/>
</dbReference>
<dbReference type="FunFam" id="3.30.1370.30:FF:000002">
    <property type="entry name" value="30S ribosomal protein S8"/>
    <property type="match status" value="1"/>
</dbReference>
<dbReference type="FunFam" id="3.30.1490.10:FF:000001">
    <property type="entry name" value="30S ribosomal protein S8"/>
    <property type="match status" value="1"/>
</dbReference>
<dbReference type="Gene3D" id="3.30.1370.30">
    <property type="match status" value="1"/>
</dbReference>
<dbReference type="Gene3D" id="3.30.1490.10">
    <property type="match status" value="1"/>
</dbReference>
<dbReference type="HAMAP" id="MF_01302_B">
    <property type="entry name" value="Ribosomal_uS8_B"/>
    <property type="match status" value="1"/>
</dbReference>
<dbReference type="InterPro" id="IPR000630">
    <property type="entry name" value="Ribosomal_uS8"/>
</dbReference>
<dbReference type="InterPro" id="IPR047863">
    <property type="entry name" value="Ribosomal_uS8_CS"/>
</dbReference>
<dbReference type="InterPro" id="IPR035987">
    <property type="entry name" value="Ribosomal_uS8_sf"/>
</dbReference>
<dbReference type="NCBIfam" id="NF001109">
    <property type="entry name" value="PRK00136.1"/>
    <property type="match status" value="1"/>
</dbReference>
<dbReference type="PANTHER" id="PTHR11758">
    <property type="entry name" value="40S RIBOSOMAL PROTEIN S15A"/>
    <property type="match status" value="1"/>
</dbReference>
<dbReference type="Pfam" id="PF00410">
    <property type="entry name" value="Ribosomal_S8"/>
    <property type="match status" value="1"/>
</dbReference>
<dbReference type="SUPFAM" id="SSF56047">
    <property type="entry name" value="Ribosomal protein S8"/>
    <property type="match status" value="1"/>
</dbReference>
<dbReference type="PROSITE" id="PS00053">
    <property type="entry name" value="RIBOSOMAL_S8"/>
    <property type="match status" value="1"/>
</dbReference>
<organism>
    <name type="scientific">Staphylococcus aureus (strain USA300 / TCH1516)</name>
    <dbReference type="NCBI Taxonomy" id="451516"/>
    <lineage>
        <taxon>Bacteria</taxon>
        <taxon>Bacillati</taxon>
        <taxon>Bacillota</taxon>
        <taxon>Bacilli</taxon>
        <taxon>Bacillales</taxon>
        <taxon>Staphylococcaceae</taxon>
        <taxon>Staphylococcus</taxon>
    </lineage>
</organism>
<evidence type="ECO:0000255" key="1">
    <source>
        <dbReference type="HAMAP-Rule" id="MF_01302"/>
    </source>
</evidence>
<evidence type="ECO:0000305" key="2"/>
<reference key="1">
    <citation type="journal article" date="2007" name="BMC Microbiol.">
        <title>Subtle genetic changes enhance virulence of methicillin resistant and sensitive Staphylococcus aureus.</title>
        <authorList>
            <person name="Highlander S.K."/>
            <person name="Hulten K.G."/>
            <person name="Qin X."/>
            <person name="Jiang H."/>
            <person name="Yerrapragada S."/>
            <person name="Mason E.O. Jr."/>
            <person name="Shang Y."/>
            <person name="Williams T.M."/>
            <person name="Fortunov R.M."/>
            <person name="Liu Y."/>
            <person name="Igboeli O."/>
            <person name="Petrosino J."/>
            <person name="Tirumalai M."/>
            <person name="Uzman A."/>
            <person name="Fox G.E."/>
            <person name="Cardenas A.M."/>
            <person name="Muzny D.M."/>
            <person name="Hemphill L."/>
            <person name="Ding Y."/>
            <person name="Dugan S."/>
            <person name="Blyth P.R."/>
            <person name="Buhay C.J."/>
            <person name="Dinh H.H."/>
            <person name="Hawes A.C."/>
            <person name="Holder M."/>
            <person name="Kovar C.L."/>
            <person name="Lee S.L."/>
            <person name="Liu W."/>
            <person name="Nazareth L.V."/>
            <person name="Wang Q."/>
            <person name="Zhou J."/>
            <person name="Kaplan S.L."/>
            <person name="Weinstock G.M."/>
        </authorList>
    </citation>
    <scope>NUCLEOTIDE SEQUENCE [LARGE SCALE GENOMIC DNA]</scope>
    <source>
        <strain>USA300 / TCH1516</strain>
    </source>
</reference>
<gene>
    <name evidence="1" type="primary">rpsH</name>
    <name type="ordered locus">USA300HOU_2227</name>
</gene>
<keyword id="KW-0687">Ribonucleoprotein</keyword>
<keyword id="KW-0689">Ribosomal protein</keyword>
<keyword id="KW-0694">RNA-binding</keyword>
<keyword id="KW-0699">rRNA-binding</keyword>
<protein>
    <recommendedName>
        <fullName evidence="1">Small ribosomal subunit protein uS8</fullName>
    </recommendedName>
    <alternativeName>
        <fullName evidence="2">30S ribosomal protein S8</fullName>
    </alternativeName>
</protein>
<proteinExistence type="inferred from homology"/>